<evidence type="ECO:0000255" key="1">
    <source>
        <dbReference type="HAMAP-Rule" id="MF_00429"/>
    </source>
</evidence>
<accession>Q9CLA7</accession>
<protein>
    <recommendedName>
        <fullName evidence="1">Na(+)-translocating NADH-quinone reductase subunit E</fullName>
        <shortName evidence="1">Na(+)-NQR subunit E</shortName>
        <shortName evidence="1">Na(+)-translocating NQR subunit E</shortName>
        <ecNumber evidence="1">7.2.1.1</ecNumber>
    </recommendedName>
    <alternativeName>
        <fullName evidence="1">NQR complex subunit E</fullName>
    </alternativeName>
    <alternativeName>
        <fullName evidence="1">NQR-1 subunit E</fullName>
    </alternativeName>
</protein>
<dbReference type="EC" id="7.2.1.1" evidence="1"/>
<dbReference type="EMBL" id="AE004439">
    <property type="protein sequence ID" value="AAK03416.1"/>
    <property type="molecule type" value="Genomic_DNA"/>
</dbReference>
<dbReference type="RefSeq" id="WP_005717818.1">
    <property type="nucleotide sequence ID" value="NC_002663.1"/>
</dbReference>
<dbReference type="SMR" id="Q9CLA7"/>
<dbReference type="STRING" id="272843.PM1332"/>
<dbReference type="EnsemblBacteria" id="AAK03416">
    <property type="protein sequence ID" value="AAK03416"/>
    <property type="gene ID" value="PM1332"/>
</dbReference>
<dbReference type="GeneID" id="77206710"/>
<dbReference type="KEGG" id="pmu:PM1332"/>
<dbReference type="HOGENOM" id="CLU_095255_0_0_6"/>
<dbReference type="OrthoDB" id="9803631at2"/>
<dbReference type="Proteomes" id="UP000000809">
    <property type="component" value="Chromosome"/>
</dbReference>
<dbReference type="GO" id="GO:0009276">
    <property type="term" value="C:Gram-negative-bacterium-type cell wall"/>
    <property type="evidence" value="ECO:0007669"/>
    <property type="project" value="InterPro"/>
</dbReference>
<dbReference type="GO" id="GO:0005886">
    <property type="term" value="C:plasma membrane"/>
    <property type="evidence" value="ECO:0007669"/>
    <property type="project" value="UniProtKB-SubCell"/>
</dbReference>
<dbReference type="GO" id="GO:0016655">
    <property type="term" value="F:oxidoreductase activity, acting on NAD(P)H, quinone or similar compound as acceptor"/>
    <property type="evidence" value="ECO:0007669"/>
    <property type="project" value="UniProtKB-UniRule"/>
</dbReference>
<dbReference type="GO" id="GO:0022904">
    <property type="term" value="P:respiratory electron transport chain"/>
    <property type="evidence" value="ECO:0007669"/>
    <property type="project" value="InterPro"/>
</dbReference>
<dbReference type="GO" id="GO:0006814">
    <property type="term" value="P:sodium ion transport"/>
    <property type="evidence" value="ECO:0007669"/>
    <property type="project" value="UniProtKB-UniRule"/>
</dbReference>
<dbReference type="HAMAP" id="MF_00429">
    <property type="entry name" value="NqrE"/>
    <property type="match status" value="1"/>
</dbReference>
<dbReference type="InterPro" id="IPR003667">
    <property type="entry name" value="NqrDE/RnfAE"/>
</dbReference>
<dbReference type="InterPro" id="IPR050133">
    <property type="entry name" value="NqrDE/RnfAE_oxidrdctase"/>
</dbReference>
<dbReference type="InterPro" id="IPR010967">
    <property type="entry name" value="NqrE"/>
</dbReference>
<dbReference type="NCBIfam" id="TIGR01940">
    <property type="entry name" value="nqrE"/>
    <property type="match status" value="1"/>
</dbReference>
<dbReference type="PANTHER" id="PTHR30335">
    <property type="entry name" value="INTEGRAL MEMBRANE PROTEIN OF SOXR-REDUCING COMPLEX"/>
    <property type="match status" value="1"/>
</dbReference>
<dbReference type="PANTHER" id="PTHR30335:SF1">
    <property type="entry name" value="NA(+)-TRANSLOCATING NADH-QUINONE REDUCTASE SUBUNIT E"/>
    <property type="match status" value="1"/>
</dbReference>
<dbReference type="Pfam" id="PF02508">
    <property type="entry name" value="Rnf-Nqr"/>
    <property type="match status" value="1"/>
</dbReference>
<dbReference type="PIRSF" id="PIRSF006102">
    <property type="entry name" value="NQR_DE"/>
    <property type="match status" value="1"/>
</dbReference>
<reference key="1">
    <citation type="journal article" date="2001" name="Proc. Natl. Acad. Sci. U.S.A.">
        <title>Complete genomic sequence of Pasteurella multocida Pm70.</title>
        <authorList>
            <person name="May B.J."/>
            <person name="Zhang Q."/>
            <person name="Li L.L."/>
            <person name="Paustian M.L."/>
            <person name="Whittam T.S."/>
            <person name="Kapur V."/>
        </authorList>
    </citation>
    <scope>NUCLEOTIDE SEQUENCE [LARGE SCALE GENOMIC DNA]</scope>
    <source>
        <strain>Pm70</strain>
    </source>
</reference>
<gene>
    <name evidence="1" type="primary">nqrE</name>
    <name type="ordered locus">PM1332</name>
</gene>
<proteinExistence type="inferred from homology"/>
<keyword id="KW-0997">Cell inner membrane</keyword>
<keyword id="KW-1003">Cell membrane</keyword>
<keyword id="KW-0406">Ion transport</keyword>
<keyword id="KW-0472">Membrane</keyword>
<keyword id="KW-0520">NAD</keyword>
<keyword id="KW-1185">Reference proteome</keyword>
<keyword id="KW-0915">Sodium</keyword>
<keyword id="KW-0739">Sodium transport</keyword>
<keyword id="KW-1278">Translocase</keyword>
<keyword id="KW-0812">Transmembrane</keyword>
<keyword id="KW-1133">Transmembrane helix</keyword>
<keyword id="KW-0813">Transport</keyword>
<keyword id="KW-0830">Ubiquinone</keyword>
<organism>
    <name type="scientific">Pasteurella multocida (strain Pm70)</name>
    <dbReference type="NCBI Taxonomy" id="272843"/>
    <lineage>
        <taxon>Bacteria</taxon>
        <taxon>Pseudomonadati</taxon>
        <taxon>Pseudomonadota</taxon>
        <taxon>Gammaproteobacteria</taxon>
        <taxon>Pasteurellales</taxon>
        <taxon>Pasteurellaceae</taxon>
        <taxon>Pasteurella</taxon>
    </lineage>
</organism>
<comment type="function">
    <text evidence="1">NQR complex catalyzes the reduction of ubiquinone-1 to ubiquinol by two successive reactions, coupled with the transport of Na(+) ions from the cytoplasm to the periplasm. NqrA to NqrE are probably involved in the second step, the conversion of ubisemiquinone to ubiquinol.</text>
</comment>
<comment type="catalytic activity">
    <reaction evidence="1">
        <text>a ubiquinone + n Na(+)(in) + NADH + H(+) = a ubiquinol + n Na(+)(out) + NAD(+)</text>
        <dbReference type="Rhea" id="RHEA:47748"/>
        <dbReference type="Rhea" id="RHEA-COMP:9565"/>
        <dbReference type="Rhea" id="RHEA-COMP:9566"/>
        <dbReference type="ChEBI" id="CHEBI:15378"/>
        <dbReference type="ChEBI" id="CHEBI:16389"/>
        <dbReference type="ChEBI" id="CHEBI:17976"/>
        <dbReference type="ChEBI" id="CHEBI:29101"/>
        <dbReference type="ChEBI" id="CHEBI:57540"/>
        <dbReference type="ChEBI" id="CHEBI:57945"/>
        <dbReference type="EC" id="7.2.1.1"/>
    </reaction>
</comment>
<comment type="subunit">
    <text evidence="1">Composed of six subunits; NqrA, NqrB, NqrC, NqrD, NqrE and NqrF.</text>
</comment>
<comment type="subcellular location">
    <subcellularLocation>
        <location evidence="1">Cell inner membrane</location>
        <topology evidence="1">Multi-pass membrane protein</topology>
    </subcellularLocation>
</comment>
<comment type="similarity">
    <text evidence="1">Belongs to the NqrDE/RnfAE family.</text>
</comment>
<name>NQRE_PASMU</name>
<feature type="chain" id="PRO_0000214255" description="Na(+)-translocating NADH-quinone reductase subunit E">
    <location>
        <begin position="1"/>
        <end position="198"/>
    </location>
</feature>
<feature type="transmembrane region" description="Helical" evidence="1">
    <location>
        <begin position="11"/>
        <end position="31"/>
    </location>
</feature>
<feature type="transmembrane region" description="Helical" evidence="1">
    <location>
        <begin position="35"/>
        <end position="55"/>
    </location>
</feature>
<feature type="transmembrane region" description="Helical" evidence="1">
    <location>
        <begin position="77"/>
        <end position="97"/>
    </location>
</feature>
<feature type="transmembrane region" description="Helical" evidence="1">
    <location>
        <begin position="110"/>
        <end position="130"/>
    </location>
</feature>
<feature type="transmembrane region" description="Helical" evidence="1">
    <location>
        <begin position="140"/>
        <end position="160"/>
    </location>
</feature>
<feature type="transmembrane region" description="Helical" evidence="1">
    <location>
        <begin position="176"/>
        <end position="196"/>
    </location>
</feature>
<sequence length="198" mass="21298">MEHYISLFVKSVFIENMALSFFLGMCTFLAVSKKVSTAFGLGIAVIVVLGIAVPVNQLVYSFILKDSALVQGIDLSFLNFITFIGVIAALVQILEMVLDKYFPALYNALGIFLPLITVNCAIFGGVSFMVQRDYTFVESVVYGIGAGTGWMLAIVALAGITEKMKYADVPAGLRGLGITFITVGLMALGFMSFSGIQL</sequence>